<name>4HYPE_BURP1</name>
<keyword id="KW-0413">Isomerase</keyword>
<organism>
    <name type="scientific">Burkholderia pseudomallei (strain 1710b)</name>
    <dbReference type="NCBI Taxonomy" id="320372"/>
    <lineage>
        <taxon>Bacteria</taxon>
        <taxon>Pseudomonadati</taxon>
        <taxon>Pseudomonadota</taxon>
        <taxon>Betaproteobacteria</taxon>
        <taxon>Burkholderiales</taxon>
        <taxon>Burkholderiaceae</taxon>
        <taxon>Burkholderia</taxon>
        <taxon>pseudomallei group</taxon>
    </lineage>
</organism>
<sequence length="320" mass="33363">MRISTLDRRDMKHIHIIDSHTGGEPTRVVVSGFPALGGGTMAERLAVLAREHDRYRAACILEPRGSDVLVGALLCEPVSAGAAAGVIFFNNAGYLGMCGHGTIGLVRTLHHMGRIGPGVHRIETPVGDVEATLHDDLSVSVRNVLAYRHAKDVVVDVPGHGAVTGDVAWGGNWFFLVSDHGQRVAGENVAALAAYASAVRAALERAGVTGRDGAPIDHIELFADDPEYDSRSFVLCPGHAYDRSPCGTGTSAKLACLAADGKLAAGVTWRQASVIGSVFSASYAAAEGGVVPTIRGSAHLSAEATLVIEDDDPFGWGIAS</sequence>
<accession>Q3JHA9</accession>
<proteinExistence type="evidence at protein level"/>
<gene>
    <name evidence="5" type="ordered locus">BURPS1710b_A1887</name>
</gene>
<reference key="1">
    <citation type="journal article" date="2010" name="Genome Biol. Evol.">
        <title>Continuing evolution of Burkholderia mallei through genome reduction and large-scale rearrangements.</title>
        <authorList>
            <person name="Losada L."/>
            <person name="Ronning C.M."/>
            <person name="DeShazer D."/>
            <person name="Woods D."/>
            <person name="Fedorova N."/>
            <person name="Kim H.S."/>
            <person name="Shabalina S.A."/>
            <person name="Pearson T.R."/>
            <person name="Brinkac L."/>
            <person name="Tan P."/>
            <person name="Nandi T."/>
            <person name="Crabtree J."/>
            <person name="Badger J."/>
            <person name="Beckstrom-Sternberg S."/>
            <person name="Saqib M."/>
            <person name="Schutzer S.E."/>
            <person name="Keim P."/>
            <person name="Nierman W.C."/>
        </authorList>
    </citation>
    <scope>NUCLEOTIDE SEQUENCE [LARGE SCALE GENOMIC DNA]</scope>
    <source>
        <strain>1710b</strain>
    </source>
</reference>
<reference key="2">
    <citation type="journal article" date="2014" name="Elife">
        <title>Prediction and characterization of enzymatic activities guided by sequence similarity and genome neighborhood networks.</title>
        <authorList>
            <person name="Zhao S."/>
            <person name="Sakai A."/>
            <person name="Zhang X."/>
            <person name="Vetting M.W."/>
            <person name="Kumar R."/>
            <person name="Hillerich B."/>
            <person name="San Francisco B."/>
            <person name="Solbiati J."/>
            <person name="Steves A."/>
            <person name="Brown S."/>
            <person name="Akiva E."/>
            <person name="Barber A."/>
            <person name="Seidel R.D."/>
            <person name="Babbitt P.C."/>
            <person name="Almo S.C."/>
            <person name="Gerlt J.A."/>
            <person name="Jacobson M.P."/>
        </authorList>
    </citation>
    <scope>FUNCTION</scope>
    <scope>CATALYTIC ACTIVITY</scope>
</reference>
<evidence type="ECO:0000250" key="1">
    <source>
        <dbReference type="UniProtKB" id="Q4KGU2"/>
    </source>
</evidence>
<evidence type="ECO:0000269" key="2">
    <source>
    </source>
</evidence>
<evidence type="ECO:0000303" key="3">
    <source>
    </source>
</evidence>
<evidence type="ECO:0000305" key="4"/>
<evidence type="ECO:0000312" key="5">
    <source>
        <dbReference type="EMBL" id="ABA51537.1"/>
    </source>
</evidence>
<dbReference type="EC" id="5.1.1.8" evidence="2"/>
<dbReference type="EMBL" id="CP000125">
    <property type="protein sequence ID" value="ABA51537.1"/>
    <property type="molecule type" value="Genomic_DNA"/>
</dbReference>
<dbReference type="SMR" id="Q3JHA9"/>
<dbReference type="EnsemblBacteria" id="ABA51537">
    <property type="protein sequence ID" value="ABA51537"/>
    <property type="gene ID" value="BURPS1710b_A1887"/>
</dbReference>
<dbReference type="KEGG" id="bpm:BURPS1710b_A1887"/>
<dbReference type="HOGENOM" id="CLU_036729_1_0_4"/>
<dbReference type="Proteomes" id="UP000002700">
    <property type="component" value="Chromosome II"/>
</dbReference>
<dbReference type="GO" id="GO:0047580">
    <property type="term" value="F:4-hydroxyproline epimerase activity"/>
    <property type="evidence" value="ECO:0007669"/>
    <property type="project" value="UniProtKB-EC"/>
</dbReference>
<dbReference type="FunFam" id="3.10.310.10:FF:000012">
    <property type="entry name" value="4-hydroxyproline 2-epimerase"/>
    <property type="match status" value="1"/>
</dbReference>
<dbReference type="Gene3D" id="3.10.310.10">
    <property type="entry name" value="Diaminopimelate Epimerase, Chain A, domain 1"/>
    <property type="match status" value="2"/>
</dbReference>
<dbReference type="InterPro" id="IPR008794">
    <property type="entry name" value="Pro_racemase_fam"/>
</dbReference>
<dbReference type="NCBIfam" id="NF010577">
    <property type="entry name" value="PRK13970.1"/>
    <property type="match status" value="1"/>
</dbReference>
<dbReference type="PANTHER" id="PTHR33442">
    <property type="entry name" value="TRANS-3-HYDROXY-L-PROLINE DEHYDRATASE"/>
    <property type="match status" value="1"/>
</dbReference>
<dbReference type="PANTHER" id="PTHR33442:SF1">
    <property type="entry name" value="TRANS-3-HYDROXY-L-PROLINE DEHYDRATASE"/>
    <property type="match status" value="1"/>
</dbReference>
<dbReference type="Pfam" id="PF05544">
    <property type="entry name" value="Pro_racemase"/>
    <property type="match status" value="1"/>
</dbReference>
<dbReference type="PIRSF" id="PIRSF029792">
    <property type="entry name" value="Pro_racemase"/>
    <property type="match status" value="1"/>
</dbReference>
<dbReference type="SFLD" id="SFLDS00028">
    <property type="entry name" value="Proline_Racemase"/>
    <property type="match status" value="1"/>
</dbReference>
<dbReference type="SUPFAM" id="SSF54506">
    <property type="entry name" value="Diaminopimelate epimerase-like"/>
    <property type="match status" value="1"/>
</dbReference>
<comment type="function">
    <text evidence="2">Catalyzes the epimerization of trans-4-hydroxy-L-proline (t4LHyp) to cis-4-hydroxy-D-proline (c4DHyp). Is likely involved in a degradation pathway that converts t4LHyp to alpha-ketoglutarate. Displays no proline racemase activity.</text>
</comment>
<comment type="catalytic activity">
    <reaction evidence="2">
        <text>trans-4-hydroxy-L-proline = cis-4-hydroxy-D-proline</text>
        <dbReference type="Rhea" id="RHEA:21152"/>
        <dbReference type="ChEBI" id="CHEBI:57690"/>
        <dbReference type="ChEBI" id="CHEBI:58375"/>
        <dbReference type="EC" id="5.1.1.8"/>
    </reaction>
</comment>
<comment type="similarity">
    <text evidence="4">Belongs to the proline racemase family.</text>
</comment>
<feature type="chain" id="PRO_0000432288" description="4-hydroxyproline 2-epimerase">
    <location>
        <begin position="1"/>
        <end position="320"/>
    </location>
</feature>
<feature type="active site" description="Proton acceptor" evidence="1">
    <location>
        <position position="98"/>
    </location>
</feature>
<feature type="active site" description="Proton donor" evidence="1">
    <location>
        <position position="246"/>
    </location>
</feature>
<feature type="binding site" evidence="1">
    <location>
        <begin position="99"/>
        <end position="100"/>
    </location>
    <ligand>
        <name>substrate</name>
    </ligand>
</feature>
<feature type="binding site" evidence="1">
    <location>
        <position position="218"/>
    </location>
    <ligand>
        <name>substrate</name>
    </ligand>
</feature>
<feature type="binding site" evidence="1">
    <location>
        <position position="242"/>
    </location>
    <ligand>
        <name>substrate</name>
    </ligand>
</feature>
<feature type="binding site" evidence="1">
    <location>
        <begin position="247"/>
        <end position="248"/>
    </location>
    <ligand>
        <name>substrate</name>
    </ligand>
</feature>
<protein>
    <recommendedName>
        <fullName evidence="3">4-hydroxyproline 2-epimerase</fullName>
        <shortName>4Hyp 2-epimerase</shortName>
        <shortName evidence="3">4HypE</shortName>
        <ecNumber evidence="2">5.1.1.8</ecNumber>
    </recommendedName>
</protein>